<gene>
    <name evidence="1" type="primary">rpoZ</name>
    <name type="ordered locus">ESA_04077</name>
</gene>
<reference key="1">
    <citation type="journal article" date="2010" name="PLoS ONE">
        <title>Genome sequence of Cronobacter sakazakii BAA-894 and comparative genomic hybridization analysis with other Cronobacter species.</title>
        <authorList>
            <person name="Kucerova E."/>
            <person name="Clifton S.W."/>
            <person name="Xia X.Q."/>
            <person name="Long F."/>
            <person name="Porwollik S."/>
            <person name="Fulton L."/>
            <person name="Fronick C."/>
            <person name="Minx P."/>
            <person name="Kyung K."/>
            <person name="Warren W."/>
            <person name="Fulton R."/>
            <person name="Feng D."/>
            <person name="Wollam A."/>
            <person name="Shah N."/>
            <person name="Bhonagiri V."/>
            <person name="Nash W.E."/>
            <person name="Hallsworth-Pepin K."/>
            <person name="Wilson R.K."/>
            <person name="McClelland M."/>
            <person name="Forsythe S.J."/>
        </authorList>
    </citation>
    <scope>NUCLEOTIDE SEQUENCE [LARGE SCALE GENOMIC DNA]</scope>
    <source>
        <strain>ATCC BAA-894</strain>
    </source>
</reference>
<accession>A7MQB3</accession>
<evidence type="ECO:0000255" key="1">
    <source>
        <dbReference type="HAMAP-Rule" id="MF_00366"/>
    </source>
</evidence>
<comment type="function">
    <text evidence="1">Promotes RNA polymerase assembly. Latches the N- and C-terminal regions of the beta' subunit thereby facilitating its interaction with the beta and alpha subunits.</text>
</comment>
<comment type="catalytic activity">
    <reaction evidence="1">
        <text>RNA(n) + a ribonucleoside 5'-triphosphate = RNA(n+1) + diphosphate</text>
        <dbReference type="Rhea" id="RHEA:21248"/>
        <dbReference type="Rhea" id="RHEA-COMP:14527"/>
        <dbReference type="Rhea" id="RHEA-COMP:17342"/>
        <dbReference type="ChEBI" id="CHEBI:33019"/>
        <dbReference type="ChEBI" id="CHEBI:61557"/>
        <dbReference type="ChEBI" id="CHEBI:140395"/>
        <dbReference type="EC" id="2.7.7.6"/>
    </reaction>
</comment>
<comment type="subunit">
    <text evidence="1">The RNAP catalytic core consists of 2 alpha, 1 beta, 1 beta' and 1 omega subunit. When a sigma factor is associated with the core the holoenzyme is formed, which can initiate transcription.</text>
</comment>
<comment type="similarity">
    <text evidence="1">Belongs to the RNA polymerase subunit omega family.</text>
</comment>
<dbReference type="EC" id="2.7.7.6" evidence="1"/>
<dbReference type="EMBL" id="CP000783">
    <property type="protein sequence ID" value="ABU79258.1"/>
    <property type="molecule type" value="Genomic_DNA"/>
</dbReference>
<dbReference type="RefSeq" id="WP_000135058.1">
    <property type="nucleotide sequence ID" value="NC_009778.1"/>
</dbReference>
<dbReference type="SMR" id="A7MQB3"/>
<dbReference type="GeneID" id="98390719"/>
<dbReference type="KEGG" id="esa:ESA_04077"/>
<dbReference type="HOGENOM" id="CLU_125406_5_3_6"/>
<dbReference type="Proteomes" id="UP000000260">
    <property type="component" value="Chromosome"/>
</dbReference>
<dbReference type="GO" id="GO:0000428">
    <property type="term" value="C:DNA-directed RNA polymerase complex"/>
    <property type="evidence" value="ECO:0007669"/>
    <property type="project" value="UniProtKB-KW"/>
</dbReference>
<dbReference type="GO" id="GO:0003677">
    <property type="term" value="F:DNA binding"/>
    <property type="evidence" value="ECO:0007669"/>
    <property type="project" value="UniProtKB-UniRule"/>
</dbReference>
<dbReference type="GO" id="GO:0003899">
    <property type="term" value="F:DNA-directed RNA polymerase activity"/>
    <property type="evidence" value="ECO:0007669"/>
    <property type="project" value="UniProtKB-UniRule"/>
</dbReference>
<dbReference type="GO" id="GO:0006351">
    <property type="term" value="P:DNA-templated transcription"/>
    <property type="evidence" value="ECO:0007669"/>
    <property type="project" value="UniProtKB-UniRule"/>
</dbReference>
<dbReference type="FunFam" id="3.90.940.10:FF:000001">
    <property type="entry name" value="DNA-directed RNA polymerase subunit omega"/>
    <property type="match status" value="1"/>
</dbReference>
<dbReference type="Gene3D" id="3.90.940.10">
    <property type="match status" value="1"/>
</dbReference>
<dbReference type="HAMAP" id="MF_00366">
    <property type="entry name" value="RNApol_bact_RpoZ"/>
    <property type="match status" value="1"/>
</dbReference>
<dbReference type="InterPro" id="IPR003716">
    <property type="entry name" value="DNA-dir_RNA_pol_omega"/>
</dbReference>
<dbReference type="InterPro" id="IPR006110">
    <property type="entry name" value="Pol_omega/Rpo6/RPB6"/>
</dbReference>
<dbReference type="InterPro" id="IPR036161">
    <property type="entry name" value="RPB6/omega-like_sf"/>
</dbReference>
<dbReference type="NCBIfam" id="TIGR00690">
    <property type="entry name" value="rpoZ"/>
    <property type="match status" value="1"/>
</dbReference>
<dbReference type="PANTHER" id="PTHR34476">
    <property type="entry name" value="DNA-DIRECTED RNA POLYMERASE SUBUNIT OMEGA"/>
    <property type="match status" value="1"/>
</dbReference>
<dbReference type="PANTHER" id="PTHR34476:SF1">
    <property type="entry name" value="DNA-DIRECTED RNA POLYMERASE SUBUNIT OMEGA"/>
    <property type="match status" value="1"/>
</dbReference>
<dbReference type="Pfam" id="PF01192">
    <property type="entry name" value="RNA_pol_Rpb6"/>
    <property type="match status" value="1"/>
</dbReference>
<dbReference type="SMART" id="SM01409">
    <property type="entry name" value="RNA_pol_Rpb6"/>
    <property type="match status" value="1"/>
</dbReference>
<dbReference type="SUPFAM" id="SSF63562">
    <property type="entry name" value="RPB6/omega subunit-like"/>
    <property type="match status" value="1"/>
</dbReference>
<feature type="chain" id="PRO_1000005925" description="DNA-directed RNA polymerase subunit omega">
    <location>
        <begin position="1"/>
        <end position="91"/>
    </location>
</feature>
<organism>
    <name type="scientific">Cronobacter sakazakii (strain ATCC BAA-894)</name>
    <name type="common">Enterobacter sakazakii</name>
    <dbReference type="NCBI Taxonomy" id="290339"/>
    <lineage>
        <taxon>Bacteria</taxon>
        <taxon>Pseudomonadati</taxon>
        <taxon>Pseudomonadota</taxon>
        <taxon>Gammaproteobacteria</taxon>
        <taxon>Enterobacterales</taxon>
        <taxon>Enterobacteriaceae</taxon>
        <taxon>Cronobacter</taxon>
    </lineage>
</organism>
<proteinExistence type="inferred from homology"/>
<sequence>MARVTVQDAVEKIGNRFDLVLVAARRARQMQVGGKDPLVPEENDKTTVIALREIEEGLINNQILDVRERQEQQEQEAAELQAVTAIAEGRR</sequence>
<keyword id="KW-0240">DNA-directed RNA polymerase</keyword>
<keyword id="KW-0548">Nucleotidyltransferase</keyword>
<keyword id="KW-1185">Reference proteome</keyword>
<keyword id="KW-0804">Transcription</keyword>
<keyword id="KW-0808">Transferase</keyword>
<name>RPOZ_CROS8</name>
<protein>
    <recommendedName>
        <fullName evidence="1">DNA-directed RNA polymerase subunit omega</fullName>
        <shortName evidence="1">RNAP omega subunit</shortName>
        <ecNumber evidence="1">2.7.7.6</ecNumber>
    </recommendedName>
    <alternativeName>
        <fullName evidence="1">RNA polymerase omega subunit</fullName>
    </alternativeName>
    <alternativeName>
        <fullName evidence="1">Transcriptase subunit omega</fullName>
    </alternativeName>
</protein>